<organism>
    <name type="scientific">Brucella suis (strain ATCC 23445 / NCTC 10510)</name>
    <dbReference type="NCBI Taxonomy" id="470137"/>
    <lineage>
        <taxon>Bacteria</taxon>
        <taxon>Pseudomonadati</taxon>
        <taxon>Pseudomonadota</taxon>
        <taxon>Alphaproteobacteria</taxon>
        <taxon>Hyphomicrobiales</taxon>
        <taxon>Brucellaceae</taxon>
        <taxon>Brucella/Ochrobactrum group</taxon>
        <taxon>Brucella</taxon>
    </lineage>
</organism>
<reference key="1">
    <citation type="submission" date="2007-12" db="EMBL/GenBank/DDBJ databases">
        <title>Brucella suis ATCC 23445 whole genome shotgun sequencing project.</title>
        <authorList>
            <person name="Setubal J.C."/>
            <person name="Bowns C."/>
            <person name="Boyle S."/>
            <person name="Crasta O.R."/>
            <person name="Czar M.J."/>
            <person name="Dharmanolla C."/>
            <person name="Gillespie J.J."/>
            <person name="Kenyon R.W."/>
            <person name="Lu J."/>
            <person name="Mane S."/>
            <person name="Mohapatra S."/>
            <person name="Nagrani S."/>
            <person name="Purkayastha A."/>
            <person name="Rajasimha H.K."/>
            <person name="Shallom J.M."/>
            <person name="Shallom S."/>
            <person name="Shukla M."/>
            <person name="Snyder E.E."/>
            <person name="Sobral B.W."/>
            <person name="Wattam A.R."/>
            <person name="Will R."/>
            <person name="Williams K."/>
            <person name="Yoo H."/>
            <person name="Bruce D."/>
            <person name="Detter C."/>
            <person name="Munk C."/>
            <person name="Brettin T.S."/>
        </authorList>
    </citation>
    <scope>NUCLEOTIDE SEQUENCE [LARGE SCALE GENOMIC DNA]</scope>
    <source>
        <strain>ATCC 23445 / NCTC 10510</strain>
    </source>
</reference>
<comment type="function">
    <text evidence="1">Functions in the biosynthesis of branched-chain amino acids. Catalyzes the dehydration of (2R,3R)-2,3-dihydroxy-3-methylpentanoate (2,3-dihydroxy-3-methylvalerate) into 2-oxo-3-methylpentanoate (2-oxo-3-methylvalerate) and of (2R)-2,3-dihydroxy-3-methylbutanoate (2,3-dihydroxyisovalerate) into 2-oxo-3-methylbutanoate (2-oxoisovalerate), the penultimate precursor to L-isoleucine and L-valine, respectively.</text>
</comment>
<comment type="catalytic activity">
    <reaction evidence="1">
        <text>(2R)-2,3-dihydroxy-3-methylbutanoate = 3-methyl-2-oxobutanoate + H2O</text>
        <dbReference type="Rhea" id="RHEA:24809"/>
        <dbReference type="ChEBI" id="CHEBI:11851"/>
        <dbReference type="ChEBI" id="CHEBI:15377"/>
        <dbReference type="ChEBI" id="CHEBI:49072"/>
        <dbReference type="EC" id="4.2.1.9"/>
    </reaction>
    <physiologicalReaction direction="left-to-right" evidence="1">
        <dbReference type="Rhea" id="RHEA:24810"/>
    </physiologicalReaction>
</comment>
<comment type="catalytic activity">
    <reaction evidence="1">
        <text>(2R,3R)-2,3-dihydroxy-3-methylpentanoate = (S)-3-methyl-2-oxopentanoate + H2O</text>
        <dbReference type="Rhea" id="RHEA:27694"/>
        <dbReference type="ChEBI" id="CHEBI:15377"/>
        <dbReference type="ChEBI" id="CHEBI:35146"/>
        <dbReference type="ChEBI" id="CHEBI:49258"/>
        <dbReference type="EC" id="4.2.1.9"/>
    </reaction>
    <physiologicalReaction direction="left-to-right" evidence="1">
        <dbReference type="Rhea" id="RHEA:27695"/>
    </physiologicalReaction>
</comment>
<comment type="cofactor">
    <cofactor evidence="1">
        <name>[2Fe-2S] cluster</name>
        <dbReference type="ChEBI" id="CHEBI:190135"/>
    </cofactor>
    <text evidence="1">Binds 1 [2Fe-2S] cluster per subunit. This cluster acts as a Lewis acid cofactor.</text>
</comment>
<comment type="cofactor">
    <cofactor evidence="1">
        <name>Mg(2+)</name>
        <dbReference type="ChEBI" id="CHEBI:18420"/>
    </cofactor>
</comment>
<comment type="pathway">
    <text evidence="1">Amino-acid biosynthesis; L-isoleucine biosynthesis; L-isoleucine from 2-oxobutanoate: step 3/4.</text>
</comment>
<comment type="pathway">
    <text evidence="1">Amino-acid biosynthesis; L-valine biosynthesis; L-valine from pyruvate: step 3/4.</text>
</comment>
<comment type="subunit">
    <text evidence="1">Homodimer.</text>
</comment>
<comment type="similarity">
    <text evidence="1">Belongs to the IlvD/Edd family.</text>
</comment>
<feature type="chain" id="PRO_1000073968" description="Dihydroxy-acid dehydratase">
    <location>
        <begin position="1"/>
        <end position="611"/>
    </location>
</feature>
<feature type="active site" description="Proton acceptor" evidence="1">
    <location>
        <position position="517"/>
    </location>
</feature>
<feature type="binding site" evidence="1">
    <location>
        <position position="81"/>
    </location>
    <ligand>
        <name>Mg(2+)</name>
        <dbReference type="ChEBI" id="CHEBI:18420"/>
    </ligand>
</feature>
<feature type="binding site" evidence="1">
    <location>
        <position position="122"/>
    </location>
    <ligand>
        <name>[2Fe-2S] cluster</name>
        <dbReference type="ChEBI" id="CHEBI:190135"/>
    </ligand>
</feature>
<feature type="binding site" evidence="1">
    <location>
        <position position="123"/>
    </location>
    <ligand>
        <name>Mg(2+)</name>
        <dbReference type="ChEBI" id="CHEBI:18420"/>
    </ligand>
</feature>
<feature type="binding site" description="via carbamate group" evidence="1">
    <location>
        <position position="124"/>
    </location>
    <ligand>
        <name>Mg(2+)</name>
        <dbReference type="ChEBI" id="CHEBI:18420"/>
    </ligand>
</feature>
<feature type="binding site" evidence="1">
    <location>
        <position position="195"/>
    </location>
    <ligand>
        <name>[2Fe-2S] cluster</name>
        <dbReference type="ChEBI" id="CHEBI:190135"/>
    </ligand>
</feature>
<feature type="binding site" evidence="1">
    <location>
        <position position="491"/>
    </location>
    <ligand>
        <name>Mg(2+)</name>
        <dbReference type="ChEBI" id="CHEBI:18420"/>
    </ligand>
</feature>
<feature type="modified residue" description="N6-carboxylysine" evidence="1">
    <location>
        <position position="124"/>
    </location>
</feature>
<accession>B0CIL1</accession>
<keyword id="KW-0001">2Fe-2S</keyword>
<keyword id="KW-0028">Amino-acid biosynthesis</keyword>
<keyword id="KW-0100">Branched-chain amino acid biosynthesis</keyword>
<keyword id="KW-0408">Iron</keyword>
<keyword id="KW-0411">Iron-sulfur</keyword>
<keyword id="KW-0456">Lyase</keyword>
<keyword id="KW-0460">Magnesium</keyword>
<keyword id="KW-0479">Metal-binding</keyword>
<proteinExistence type="inferred from homology"/>
<dbReference type="EC" id="4.2.1.9" evidence="1"/>
<dbReference type="EMBL" id="CP000911">
    <property type="protein sequence ID" value="ABY37207.1"/>
    <property type="molecule type" value="Genomic_DNA"/>
</dbReference>
<dbReference type="RefSeq" id="WP_006071947.1">
    <property type="nucleotide sequence ID" value="NC_010169.1"/>
</dbReference>
<dbReference type="SMR" id="B0CIL1"/>
<dbReference type="KEGG" id="bmt:BSUIS_A0103"/>
<dbReference type="HOGENOM" id="CLU_014271_4_2_5"/>
<dbReference type="UniPathway" id="UPA00047">
    <property type="reaction ID" value="UER00057"/>
</dbReference>
<dbReference type="UniPathway" id="UPA00049">
    <property type="reaction ID" value="UER00061"/>
</dbReference>
<dbReference type="PRO" id="PR:B0CIL1"/>
<dbReference type="Proteomes" id="UP000008545">
    <property type="component" value="Chromosome I"/>
</dbReference>
<dbReference type="GO" id="GO:0005829">
    <property type="term" value="C:cytosol"/>
    <property type="evidence" value="ECO:0007669"/>
    <property type="project" value="TreeGrafter"/>
</dbReference>
<dbReference type="GO" id="GO:0051537">
    <property type="term" value="F:2 iron, 2 sulfur cluster binding"/>
    <property type="evidence" value="ECO:0007669"/>
    <property type="project" value="UniProtKB-UniRule"/>
</dbReference>
<dbReference type="GO" id="GO:0004160">
    <property type="term" value="F:dihydroxy-acid dehydratase activity"/>
    <property type="evidence" value="ECO:0007669"/>
    <property type="project" value="UniProtKB-UniRule"/>
</dbReference>
<dbReference type="GO" id="GO:0000287">
    <property type="term" value="F:magnesium ion binding"/>
    <property type="evidence" value="ECO:0007669"/>
    <property type="project" value="UniProtKB-UniRule"/>
</dbReference>
<dbReference type="GO" id="GO:0009097">
    <property type="term" value="P:isoleucine biosynthetic process"/>
    <property type="evidence" value="ECO:0007669"/>
    <property type="project" value="UniProtKB-UniRule"/>
</dbReference>
<dbReference type="GO" id="GO:0009099">
    <property type="term" value="P:L-valine biosynthetic process"/>
    <property type="evidence" value="ECO:0007669"/>
    <property type="project" value="UniProtKB-UniRule"/>
</dbReference>
<dbReference type="FunFam" id="3.50.30.80:FF:000001">
    <property type="entry name" value="Dihydroxy-acid dehydratase"/>
    <property type="match status" value="1"/>
</dbReference>
<dbReference type="Gene3D" id="3.50.30.80">
    <property type="entry name" value="IlvD/EDD C-terminal domain-like"/>
    <property type="match status" value="1"/>
</dbReference>
<dbReference type="HAMAP" id="MF_00012">
    <property type="entry name" value="IlvD"/>
    <property type="match status" value="1"/>
</dbReference>
<dbReference type="InterPro" id="IPR042096">
    <property type="entry name" value="Dihydro-acid_dehy_C"/>
</dbReference>
<dbReference type="InterPro" id="IPR004404">
    <property type="entry name" value="DihydroxyA_deHydtase"/>
</dbReference>
<dbReference type="InterPro" id="IPR020558">
    <property type="entry name" value="DiOHA_6PGluconate_deHydtase_CS"/>
</dbReference>
<dbReference type="InterPro" id="IPR056740">
    <property type="entry name" value="ILV_EDD_C"/>
</dbReference>
<dbReference type="InterPro" id="IPR000581">
    <property type="entry name" value="ILV_EDD_N"/>
</dbReference>
<dbReference type="InterPro" id="IPR037237">
    <property type="entry name" value="IlvD/EDD_N"/>
</dbReference>
<dbReference type="NCBIfam" id="TIGR00110">
    <property type="entry name" value="ilvD"/>
    <property type="match status" value="1"/>
</dbReference>
<dbReference type="NCBIfam" id="NF009103">
    <property type="entry name" value="PRK12448.1"/>
    <property type="match status" value="1"/>
</dbReference>
<dbReference type="PANTHER" id="PTHR43661">
    <property type="entry name" value="D-XYLONATE DEHYDRATASE"/>
    <property type="match status" value="1"/>
</dbReference>
<dbReference type="PANTHER" id="PTHR43661:SF3">
    <property type="entry name" value="D-XYLONATE DEHYDRATASE YAGF-RELATED"/>
    <property type="match status" value="1"/>
</dbReference>
<dbReference type="Pfam" id="PF24877">
    <property type="entry name" value="ILV_EDD_C"/>
    <property type="match status" value="1"/>
</dbReference>
<dbReference type="Pfam" id="PF00920">
    <property type="entry name" value="ILVD_EDD_N"/>
    <property type="match status" value="1"/>
</dbReference>
<dbReference type="SUPFAM" id="SSF143975">
    <property type="entry name" value="IlvD/EDD N-terminal domain-like"/>
    <property type="match status" value="1"/>
</dbReference>
<dbReference type="SUPFAM" id="SSF52016">
    <property type="entry name" value="LeuD/IlvD-like"/>
    <property type="match status" value="1"/>
</dbReference>
<dbReference type="PROSITE" id="PS00886">
    <property type="entry name" value="ILVD_EDD_1"/>
    <property type="match status" value="1"/>
</dbReference>
<dbReference type="PROSITE" id="PS00887">
    <property type="entry name" value="ILVD_EDD_2"/>
    <property type="match status" value="1"/>
</dbReference>
<sequence>MPPYRSRTTTHGRNMAGARGLWRATGMKDEDFGKPIIAVVNSFTQFVPGHVHLKDLGQLVAREIESAGGVAKEFNTIAVDDGIAMGHDGMLYSLPSRELIADSVEYMVNAHCADAMVCISNCDKITPGMLMAALRLNIPVVFVSGGPMEAGKVVWEDSVKKLDLVDAMVAAADDHYTDEQVKAIERSACPTCGSCSGMFTANSMNCLTEALGLSLPGNGSTLATHADRKRLFVEAGHLIVDLARRYYEQDDESVLPRSIATFSAFENAMTLDIAMGGSTNTVLHLLAAAQEAEIDFTMADIDRLSRRVPVLCKVAPAVSSVHMEDVHHAGGIMGILGQLDNAGLLTTSIPTVHSETLAKALDHWDVTRTNSEMVHKFYSAAPGGVPTQVAFSQERRFDKVDTDREKGVIRSKEHAFSQDGGLAVLYGNLAEDGCIVKTAGVDDSILKFSGPARIFESQDSAVLGILNGKIKPGDIVLIRYEGPRGGPGMQEMLYPTSYLKSKGLGKACALITDGRFSGGSSGLSIGHVSPEAAEGGTIGLVREGDIIDIDIPNRKIHLAVDDATVAERRAEQDAAGWKPAEERKRKISTALKAYAAMATSAARGAVRKLPD</sequence>
<gene>
    <name evidence="1" type="primary">ilvD</name>
    <name type="ordered locus">BSUIS_A0103</name>
</gene>
<name>ILVD_BRUSI</name>
<evidence type="ECO:0000255" key="1">
    <source>
        <dbReference type="HAMAP-Rule" id="MF_00012"/>
    </source>
</evidence>
<protein>
    <recommendedName>
        <fullName evidence="1">Dihydroxy-acid dehydratase</fullName>
        <shortName evidence="1">DAD</shortName>
        <ecNumber evidence="1">4.2.1.9</ecNumber>
    </recommendedName>
</protein>